<gene>
    <name evidence="1" type="primary">surE</name>
    <name type="ordered locus">Mbar_A1192</name>
</gene>
<proteinExistence type="inferred from homology"/>
<protein>
    <recommendedName>
        <fullName evidence="1">5'-nucleotidase SurE</fullName>
        <ecNumber evidence="1">3.1.3.5</ecNumber>
    </recommendedName>
    <alternativeName>
        <fullName evidence="1">Nucleoside 5'-monophosphate phosphohydrolase</fullName>
    </alternativeName>
</protein>
<comment type="function">
    <text evidence="1">Nucleotidase that shows phosphatase activity on nucleoside 5'-monophosphates.</text>
</comment>
<comment type="catalytic activity">
    <reaction evidence="1">
        <text>a ribonucleoside 5'-phosphate + H2O = a ribonucleoside + phosphate</text>
        <dbReference type="Rhea" id="RHEA:12484"/>
        <dbReference type="ChEBI" id="CHEBI:15377"/>
        <dbReference type="ChEBI" id="CHEBI:18254"/>
        <dbReference type="ChEBI" id="CHEBI:43474"/>
        <dbReference type="ChEBI" id="CHEBI:58043"/>
        <dbReference type="EC" id="3.1.3.5"/>
    </reaction>
</comment>
<comment type="cofactor">
    <cofactor evidence="1">
        <name>a divalent metal cation</name>
        <dbReference type="ChEBI" id="CHEBI:60240"/>
    </cofactor>
    <text evidence="1">Binds 1 divalent metal cation per subunit.</text>
</comment>
<comment type="subcellular location">
    <subcellularLocation>
        <location evidence="1">Cytoplasm</location>
    </subcellularLocation>
</comment>
<comment type="similarity">
    <text evidence="1">Belongs to the SurE nucleotidase family.</text>
</comment>
<feature type="chain" id="PRO_0000235677" description="5'-nucleotidase SurE">
    <location>
        <begin position="1"/>
        <end position="267"/>
    </location>
</feature>
<feature type="binding site" evidence="1">
    <location>
        <position position="14"/>
    </location>
    <ligand>
        <name>a divalent metal cation</name>
        <dbReference type="ChEBI" id="CHEBI:60240"/>
    </ligand>
</feature>
<feature type="binding site" evidence="1">
    <location>
        <position position="15"/>
    </location>
    <ligand>
        <name>a divalent metal cation</name>
        <dbReference type="ChEBI" id="CHEBI:60240"/>
    </ligand>
</feature>
<feature type="binding site" evidence="1">
    <location>
        <position position="45"/>
    </location>
    <ligand>
        <name>a divalent metal cation</name>
        <dbReference type="ChEBI" id="CHEBI:60240"/>
    </ligand>
</feature>
<feature type="binding site" evidence="1">
    <location>
        <position position="100"/>
    </location>
    <ligand>
        <name>a divalent metal cation</name>
        <dbReference type="ChEBI" id="CHEBI:60240"/>
    </ligand>
</feature>
<keyword id="KW-0963">Cytoplasm</keyword>
<keyword id="KW-0378">Hydrolase</keyword>
<keyword id="KW-0479">Metal-binding</keyword>
<keyword id="KW-0547">Nucleotide-binding</keyword>
<organism>
    <name type="scientific">Methanosarcina barkeri (strain Fusaro / DSM 804)</name>
    <dbReference type="NCBI Taxonomy" id="269797"/>
    <lineage>
        <taxon>Archaea</taxon>
        <taxon>Methanobacteriati</taxon>
        <taxon>Methanobacteriota</taxon>
        <taxon>Stenosarchaea group</taxon>
        <taxon>Methanomicrobia</taxon>
        <taxon>Methanosarcinales</taxon>
        <taxon>Methanosarcinaceae</taxon>
        <taxon>Methanosarcina</taxon>
    </lineage>
</organism>
<accession>Q46D82</accession>
<evidence type="ECO:0000255" key="1">
    <source>
        <dbReference type="HAMAP-Rule" id="MF_00060"/>
    </source>
</evidence>
<sequence>MGKLMAPKILVTNDDGVYSTGLKAAFDSVSDLGEVTISAPAVQQSGVGRSISIFEPLRITKTNAGGIPAYSVGGTPTDAVILGIFTILKEMPDLVLSGFNIGENISTDTITTSGTIGGALEAASYGVPAIAASMQVLDEGQKFDDPRDYHRERFEAGIKVVNRVAQNVLNYGMPENVDLLNINIPYHAEEDTPIEITRLARKIFKTDVEERRDPRGRPYYWIAGDLIREEEEGTDVHAIMQKGHVSITPISLDSTARIEFSEIEKYL</sequence>
<reference key="1">
    <citation type="journal article" date="2006" name="J. Bacteriol.">
        <title>The Methanosarcina barkeri genome: comparative analysis with Methanosarcina acetivorans and Methanosarcina mazei reveals extensive rearrangement within methanosarcinal genomes.</title>
        <authorList>
            <person name="Maeder D.L."/>
            <person name="Anderson I."/>
            <person name="Brettin T.S."/>
            <person name="Bruce D.C."/>
            <person name="Gilna P."/>
            <person name="Han C.S."/>
            <person name="Lapidus A."/>
            <person name="Metcalf W.W."/>
            <person name="Saunders E."/>
            <person name="Tapia R."/>
            <person name="Sowers K.R."/>
        </authorList>
    </citation>
    <scope>NUCLEOTIDE SEQUENCE [LARGE SCALE GENOMIC DNA]</scope>
    <source>
        <strain>Fusaro / DSM 804</strain>
    </source>
</reference>
<name>SURE_METBF</name>
<dbReference type="EC" id="3.1.3.5" evidence="1"/>
<dbReference type="EMBL" id="CP000099">
    <property type="protein sequence ID" value="AAZ70160.1"/>
    <property type="molecule type" value="Genomic_DNA"/>
</dbReference>
<dbReference type="SMR" id="Q46D82"/>
<dbReference type="STRING" id="269797.Mbar_A1192"/>
<dbReference type="PaxDb" id="269797-Mbar_A1192"/>
<dbReference type="KEGG" id="mba:Mbar_A1192"/>
<dbReference type="eggNOG" id="arCOG02303">
    <property type="taxonomic scope" value="Archaea"/>
</dbReference>
<dbReference type="HOGENOM" id="CLU_045192_1_3_2"/>
<dbReference type="OrthoDB" id="26873at2157"/>
<dbReference type="GO" id="GO:0005737">
    <property type="term" value="C:cytoplasm"/>
    <property type="evidence" value="ECO:0007669"/>
    <property type="project" value="UniProtKB-SubCell"/>
</dbReference>
<dbReference type="GO" id="GO:0008253">
    <property type="term" value="F:5'-nucleotidase activity"/>
    <property type="evidence" value="ECO:0007669"/>
    <property type="project" value="UniProtKB-UniRule"/>
</dbReference>
<dbReference type="GO" id="GO:0046872">
    <property type="term" value="F:metal ion binding"/>
    <property type="evidence" value="ECO:0007669"/>
    <property type="project" value="UniProtKB-UniRule"/>
</dbReference>
<dbReference type="GO" id="GO:0000166">
    <property type="term" value="F:nucleotide binding"/>
    <property type="evidence" value="ECO:0007669"/>
    <property type="project" value="UniProtKB-KW"/>
</dbReference>
<dbReference type="Gene3D" id="3.40.1210.10">
    <property type="entry name" value="Survival protein SurE-like phosphatase/nucleotidase"/>
    <property type="match status" value="1"/>
</dbReference>
<dbReference type="HAMAP" id="MF_00060">
    <property type="entry name" value="SurE"/>
    <property type="match status" value="1"/>
</dbReference>
<dbReference type="InterPro" id="IPR030048">
    <property type="entry name" value="SurE"/>
</dbReference>
<dbReference type="InterPro" id="IPR002828">
    <property type="entry name" value="SurE-like_Pase/nucleotidase"/>
</dbReference>
<dbReference type="InterPro" id="IPR036523">
    <property type="entry name" value="SurE-like_sf"/>
</dbReference>
<dbReference type="NCBIfam" id="NF001491">
    <property type="entry name" value="PRK00346.2-1"/>
    <property type="match status" value="1"/>
</dbReference>
<dbReference type="NCBIfam" id="TIGR00087">
    <property type="entry name" value="surE"/>
    <property type="match status" value="1"/>
</dbReference>
<dbReference type="PANTHER" id="PTHR30457">
    <property type="entry name" value="5'-NUCLEOTIDASE SURE"/>
    <property type="match status" value="1"/>
</dbReference>
<dbReference type="PANTHER" id="PTHR30457:SF0">
    <property type="entry name" value="PHOSPHATASE, PUTATIVE (AFU_ORTHOLOGUE AFUA_4G01070)-RELATED"/>
    <property type="match status" value="1"/>
</dbReference>
<dbReference type="Pfam" id="PF01975">
    <property type="entry name" value="SurE"/>
    <property type="match status" value="1"/>
</dbReference>
<dbReference type="SUPFAM" id="SSF64167">
    <property type="entry name" value="SurE-like"/>
    <property type="match status" value="1"/>
</dbReference>